<protein>
    <recommendedName>
        <fullName evidence="10">5-hydroxytryptamine receptor 1F</fullName>
        <shortName evidence="10">5-HT-1F</shortName>
        <shortName evidence="10">5-HT1F</shortName>
    </recommendedName>
    <alternativeName>
        <fullName evidence="10">Serotonin receptor 1F</fullName>
    </alternativeName>
</protein>
<keyword id="KW-0002">3D-structure</keyword>
<keyword id="KW-1003">Cell membrane</keyword>
<keyword id="KW-1015">Disulfide bond</keyword>
<keyword id="KW-0297">G-protein coupled receptor</keyword>
<keyword id="KW-0325">Glycoprotein</keyword>
<keyword id="KW-0472">Membrane</keyword>
<keyword id="KW-1267">Proteomics identification</keyword>
<keyword id="KW-0675">Receptor</keyword>
<keyword id="KW-1185">Reference proteome</keyword>
<keyword id="KW-0807">Transducer</keyword>
<keyword id="KW-0812">Transmembrane</keyword>
<keyword id="KW-1133">Transmembrane helix</keyword>
<name>5HT1F_HUMAN</name>
<gene>
    <name evidence="12" type="primary">HTR1F</name>
    <name evidence="11" type="synonym">HTR1EL</name>
</gene>
<comment type="function">
    <text evidence="5 6 7 8 9">G-protein coupled receptor for 5-hydroxytryptamine (serotonin) (PubMed:21422162, PubMed:34239069, PubMed:8380639, PubMed:8384716). Also functions as a receptor for various alkaloids and psychoactive substances (PubMed:21422162, PubMed:8380639, PubMed:8384716). Receptor for lasmiditan, a drug for the treatment of acute migraine (PubMed:34239069). Ligand binding causes a conformation change that triggers signaling via guanine nucleotide-binding proteins (G proteins) and modulates the activity of downstream effectors, such as adenylate cyclase (PubMed:34239069). HTR1F is coupled to G(i)/G(o) G alpha proteins and mediates inhibitory neurotransmission by inhibiting adenylate cyclase activity (PubMed:34239069, PubMed:35610220).</text>
</comment>
<comment type="subcellular location">
    <subcellularLocation>
        <location evidence="5 8 9">Cell membrane</location>
        <topology evidence="8 9">Multi-pass membrane protein</topology>
    </subcellularLocation>
</comment>
<comment type="similarity">
    <text evidence="4">Belongs to the G-protein coupled receptor 1 family.</text>
</comment>
<proteinExistence type="evidence at protein level"/>
<evidence type="ECO:0000250" key="1">
    <source>
        <dbReference type="UniProtKB" id="P28221"/>
    </source>
</evidence>
<evidence type="ECO:0000250" key="2">
    <source>
        <dbReference type="UniProtKB" id="P41595"/>
    </source>
</evidence>
<evidence type="ECO:0000255" key="3"/>
<evidence type="ECO:0000255" key="4">
    <source>
        <dbReference type="PROSITE-ProRule" id="PRU00521"/>
    </source>
</evidence>
<evidence type="ECO:0000269" key="5">
    <source>
    </source>
</evidence>
<evidence type="ECO:0000269" key="6">
    <source>
    </source>
</evidence>
<evidence type="ECO:0000269" key="7">
    <source>
    </source>
</evidence>
<evidence type="ECO:0000269" key="8">
    <source>
    </source>
</evidence>
<evidence type="ECO:0000269" key="9">
    <source>
    </source>
</evidence>
<evidence type="ECO:0000303" key="10">
    <source>
    </source>
</evidence>
<evidence type="ECO:0000303" key="11">
    <source>
    </source>
</evidence>
<evidence type="ECO:0000312" key="12">
    <source>
        <dbReference type="HGNC" id="HGNC:5292"/>
    </source>
</evidence>
<evidence type="ECO:0007744" key="13">
    <source>
        <dbReference type="PDB" id="7EXD"/>
    </source>
</evidence>
<evidence type="ECO:0007829" key="14">
    <source>
        <dbReference type="PDB" id="7EXD"/>
    </source>
</evidence>
<dbReference type="EMBL" id="L05597">
    <property type="protein sequence ID" value="AAA36605.1"/>
    <property type="molecule type" value="Genomic_DNA"/>
</dbReference>
<dbReference type="EMBL" id="L04962">
    <property type="protein sequence ID" value="AAA36646.1"/>
    <property type="molecule type" value="Genomic_DNA"/>
</dbReference>
<dbReference type="EMBL" id="AF498981">
    <property type="protein sequence ID" value="AAM21128.1"/>
    <property type="molecule type" value="mRNA"/>
</dbReference>
<dbReference type="EMBL" id="AC119733">
    <property type="status" value="NOT_ANNOTATED_CDS"/>
    <property type="molecule type" value="Genomic_DNA"/>
</dbReference>
<dbReference type="EMBL" id="BC069125">
    <property type="protein sequence ID" value="AAH69125.1"/>
    <property type="molecule type" value="mRNA"/>
</dbReference>
<dbReference type="CCDS" id="CCDS2920.1"/>
<dbReference type="PIR" id="A47321">
    <property type="entry name" value="A47321"/>
</dbReference>
<dbReference type="RefSeq" id="NP_000857.1">
    <property type="nucleotide sequence ID" value="NM_000866.5"/>
</dbReference>
<dbReference type="RefSeq" id="NP_001309137.1">
    <property type="nucleotide sequence ID" value="NM_001322208.2"/>
</dbReference>
<dbReference type="RefSeq" id="NP_001309138.1">
    <property type="nucleotide sequence ID" value="NM_001322209.2"/>
</dbReference>
<dbReference type="RefSeq" id="NP_001309139.1">
    <property type="nucleotide sequence ID" value="NM_001322210.2"/>
</dbReference>
<dbReference type="RefSeq" id="XP_005264808.1">
    <property type="nucleotide sequence ID" value="XM_005264751.4"/>
</dbReference>
<dbReference type="RefSeq" id="XP_011531966.1">
    <property type="nucleotide sequence ID" value="XM_011533664.3"/>
</dbReference>
<dbReference type="RefSeq" id="XP_054202387.1">
    <property type="nucleotide sequence ID" value="XM_054346412.1"/>
</dbReference>
<dbReference type="RefSeq" id="XP_054202388.1">
    <property type="nucleotide sequence ID" value="XM_054346413.1"/>
</dbReference>
<dbReference type="PDB" id="7EXD">
    <property type="method" value="EM"/>
    <property type="resolution" value="3.40 A"/>
    <property type="chains" value="R=1-366"/>
</dbReference>
<dbReference type="PDBsum" id="7EXD"/>
<dbReference type="EMDB" id="EMD-31371"/>
<dbReference type="SMR" id="P30939"/>
<dbReference type="FunCoup" id="P30939">
    <property type="interactions" value="819"/>
</dbReference>
<dbReference type="STRING" id="9606.ENSP00000322924"/>
<dbReference type="BindingDB" id="P30939"/>
<dbReference type="ChEMBL" id="CHEMBL1805"/>
<dbReference type="DrugBank" id="DB01239">
    <property type="generic name" value="Chlorprothixene"/>
</dbReference>
<dbReference type="DrugBank" id="DB11273">
    <property type="generic name" value="Dihydroergocornine"/>
</dbReference>
<dbReference type="DrugBank" id="DB13345">
    <property type="generic name" value="Dihydroergocristine"/>
</dbReference>
<dbReference type="DrugBank" id="DB00320">
    <property type="generic name" value="Dihydroergotamine"/>
</dbReference>
<dbReference type="DrugBank" id="DB00216">
    <property type="generic name" value="Eletriptan"/>
</dbReference>
<dbReference type="DrugBank" id="DB01049">
    <property type="generic name" value="Ergoloid mesylate"/>
</dbReference>
<dbReference type="DrugBank" id="DB00696">
    <property type="generic name" value="Ergotamine"/>
</dbReference>
<dbReference type="DrugBank" id="DB12141">
    <property type="generic name" value="Gilteritinib"/>
</dbReference>
<dbReference type="DrugBank" id="DB01221">
    <property type="generic name" value="Ketamine"/>
</dbReference>
<dbReference type="DrugBank" id="DB11732">
    <property type="generic name" value="Lasmiditan"/>
</dbReference>
<dbReference type="DrugBank" id="DB12540">
    <property type="generic name" value="Lecozotan"/>
</dbReference>
<dbReference type="DrugBank" id="DB13520">
    <property type="generic name" value="Metergoline"/>
</dbReference>
<dbReference type="DrugBank" id="DB00247">
    <property type="generic name" value="Methysergide"/>
</dbReference>
<dbReference type="DrugBank" id="DB06148">
    <property type="generic name" value="Mianserin"/>
</dbReference>
<dbReference type="DrugBank" id="DB00952">
    <property type="generic name" value="Naratriptan"/>
</dbReference>
<dbReference type="DrugBank" id="DB00334">
    <property type="generic name" value="Olanzapine"/>
</dbReference>
<dbReference type="DrugBank" id="DB00715">
    <property type="generic name" value="Paroxetine"/>
</dbReference>
<dbReference type="DrugBank" id="DB00953">
    <property type="generic name" value="Rizatriptan"/>
</dbReference>
<dbReference type="DrugBank" id="DB09304">
    <property type="generic name" value="Setiptiline"/>
</dbReference>
<dbReference type="DrugBank" id="DB00669">
    <property type="generic name" value="Sumatriptan"/>
</dbReference>
<dbReference type="DrugBank" id="DB13025">
    <property type="generic name" value="Tiapride"/>
</dbReference>
<dbReference type="DrugBank" id="DB00315">
    <property type="generic name" value="Zolmitriptan"/>
</dbReference>
<dbReference type="DrugCentral" id="P30939"/>
<dbReference type="GuidetoPHARMACOLOGY" id="5"/>
<dbReference type="GlyCosmos" id="P30939">
    <property type="glycosylation" value="2 sites, No reported glycans"/>
</dbReference>
<dbReference type="GlyGen" id="P30939">
    <property type="glycosylation" value="3 sites, 1 O-linked glycan (1 site)"/>
</dbReference>
<dbReference type="iPTMnet" id="P30939"/>
<dbReference type="PhosphoSitePlus" id="P30939"/>
<dbReference type="BioMuta" id="HTR1F"/>
<dbReference type="DMDM" id="398967"/>
<dbReference type="MassIVE" id="P30939"/>
<dbReference type="PaxDb" id="9606-ENSP00000322924"/>
<dbReference type="PeptideAtlas" id="P30939"/>
<dbReference type="Antibodypedia" id="1481">
    <property type="antibodies" value="200 antibodies from 29 providers"/>
</dbReference>
<dbReference type="DNASU" id="3355"/>
<dbReference type="Ensembl" id="ENST00000319595.7">
    <property type="protein sequence ID" value="ENSP00000322924.4"/>
    <property type="gene ID" value="ENSG00000179097.7"/>
</dbReference>
<dbReference type="GeneID" id="3355"/>
<dbReference type="KEGG" id="hsa:3355"/>
<dbReference type="MANE-Select" id="ENST00000319595.7">
    <property type="protein sequence ID" value="ENSP00000322924.4"/>
    <property type="RefSeq nucleotide sequence ID" value="NM_001322209.2"/>
    <property type="RefSeq protein sequence ID" value="NP_001309138.1"/>
</dbReference>
<dbReference type="UCSC" id="uc062lsi.1">
    <property type="organism name" value="human"/>
</dbReference>
<dbReference type="AGR" id="HGNC:5292"/>
<dbReference type="CTD" id="3355"/>
<dbReference type="DisGeNET" id="3355"/>
<dbReference type="GeneCards" id="HTR1F"/>
<dbReference type="HGNC" id="HGNC:5292">
    <property type="gene designation" value="HTR1F"/>
</dbReference>
<dbReference type="HPA" id="ENSG00000179097">
    <property type="expression patterns" value="Tissue enhanced (placenta, retina)"/>
</dbReference>
<dbReference type="MIM" id="182134">
    <property type="type" value="gene"/>
</dbReference>
<dbReference type="neXtProt" id="NX_P30939"/>
<dbReference type="OpenTargets" id="ENSG00000179097"/>
<dbReference type="PharmGKB" id="PA29553"/>
<dbReference type="VEuPathDB" id="HostDB:ENSG00000179097"/>
<dbReference type="eggNOG" id="KOG3656">
    <property type="taxonomic scope" value="Eukaryota"/>
</dbReference>
<dbReference type="GeneTree" id="ENSGT01010000222287"/>
<dbReference type="HOGENOM" id="CLU_009579_11_1_1"/>
<dbReference type="InParanoid" id="P30939"/>
<dbReference type="OMA" id="CVIKHDH"/>
<dbReference type="OrthoDB" id="5956310at2759"/>
<dbReference type="PAN-GO" id="P30939">
    <property type="GO annotations" value="8 GO annotations based on evolutionary models"/>
</dbReference>
<dbReference type="PhylomeDB" id="P30939"/>
<dbReference type="TreeFam" id="TF316350"/>
<dbReference type="PathwayCommons" id="P30939"/>
<dbReference type="Reactome" id="R-HSA-390666">
    <property type="pathway name" value="Serotonin receptors"/>
</dbReference>
<dbReference type="Reactome" id="R-HSA-418594">
    <property type="pathway name" value="G alpha (i) signalling events"/>
</dbReference>
<dbReference type="SignaLink" id="P30939"/>
<dbReference type="SIGNOR" id="P30939"/>
<dbReference type="BioGRID-ORCS" id="3355">
    <property type="hits" value="12 hits in 1156 CRISPR screens"/>
</dbReference>
<dbReference type="ChiTaRS" id="HTR1F">
    <property type="organism name" value="human"/>
</dbReference>
<dbReference type="GeneWiki" id="5-HT1F_receptor"/>
<dbReference type="GenomeRNAi" id="3355"/>
<dbReference type="Pharos" id="P30939">
    <property type="development level" value="Tclin"/>
</dbReference>
<dbReference type="PRO" id="PR:P30939"/>
<dbReference type="Proteomes" id="UP000005640">
    <property type="component" value="Chromosome 3"/>
</dbReference>
<dbReference type="RNAct" id="P30939">
    <property type="molecule type" value="protein"/>
</dbReference>
<dbReference type="Bgee" id="ENSG00000179097">
    <property type="expression patterns" value="Expressed in male germ line stem cell (sensu Vertebrata) in testis and 73 other cell types or tissues"/>
</dbReference>
<dbReference type="GO" id="GO:0030425">
    <property type="term" value="C:dendrite"/>
    <property type="evidence" value="ECO:0000318"/>
    <property type="project" value="GO_Central"/>
</dbReference>
<dbReference type="GO" id="GO:0005886">
    <property type="term" value="C:plasma membrane"/>
    <property type="evidence" value="ECO:0000315"/>
    <property type="project" value="UniProtKB"/>
</dbReference>
<dbReference type="GO" id="GO:0045202">
    <property type="term" value="C:synapse"/>
    <property type="evidence" value="ECO:0007669"/>
    <property type="project" value="GOC"/>
</dbReference>
<dbReference type="GO" id="GO:0004993">
    <property type="term" value="F:G protein-coupled serotonin receptor activity"/>
    <property type="evidence" value="ECO:0000314"/>
    <property type="project" value="MGI"/>
</dbReference>
<dbReference type="GO" id="GO:0001586">
    <property type="term" value="F:Gi/o-coupled serotonin receptor activity"/>
    <property type="evidence" value="ECO:0000314"/>
    <property type="project" value="UniProtKB"/>
</dbReference>
<dbReference type="GO" id="GO:0030594">
    <property type="term" value="F:neurotransmitter receptor activity"/>
    <property type="evidence" value="ECO:0000318"/>
    <property type="project" value="GO_Central"/>
</dbReference>
<dbReference type="GO" id="GO:0051378">
    <property type="term" value="F:serotonin binding"/>
    <property type="evidence" value="ECO:0000314"/>
    <property type="project" value="MGI"/>
</dbReference>
<dbReference type="GO" id="GO:0099589">
    <property type="term" value="F:serotonin receptor activity"/>
    <property type="evidence" value="ECO:0000314"/>
    <property type="project" value="UniProt"/>
</dbReference>
<dbReference type="GO" id="GO:0007193">
    <property type="term" value="P:adenylate cyclase-inhibiting G protein-coupled receptor signaling pathway"/>
    <property type="evidence" value="ECO:0000315"/>
    <property type="project" value="UniProtKB"/>
</dbReference>
<dbReference type="GO" id="GO:0007198">
    <property type="term" value="P:adenylate cyclase-inhibiting serotonin receptor signaling pathway"/>
    <property type="evidence" value="ECO:0000314"/>
    <property type="project" value="UniProtKB"/>
</dbReference>
<dbReference type="GO" id="GO:0007268">
    <property type="term" value="P:chemical synaptic transmission"/>
    <property type="evidence" value="ECO:0000318"/>
    <property type="project" value="GO_Central"/>
</dbReference>
<dbReference type="GO" id="GO:0007187">
    <property type="term" value="P:G protein-coupled receptor signaling pathway, coupled to cyclic nucleotide second messenger"/>
    <property type="evidence" value="ECO:0000318"/>
    <property type="project" value="GO_Central"/>
</dbReference>
<dbReference type="CDD" id="cd15334">
    <property type="entry name" value="7tmA_5-HT1F"/>
    <property type="match status" value="1"/>
</dbReference>
<dbReference type="FunFam" id="1.20.1070.10:FF:000085">
    <property type="entry name" value="5-hydroxytryptamine receptor 1F"/>
    <property type="match status" value="1"/>
</dbReference>
<dbReference type="Gene3D" id="1.20.1070.10">
    <property type="entry name" value="Rhodopsin 7-helix transmembrane proteins"/>
    <property type="match status" value="1"/>
</dbReference>
<dbReference type="InterPro" id="IPR000450">
    <property type="entry name" value="5HT1F_rcpt"/>
</dbReference>
<dbReference type="InterPro" id="IPR002231">
    <property type="entry name" value="5HT_rcpt"/>
</dbReference>
<dbReference type="InterPro" id="IPR000276">
    <property type="entry name" value="GPCR_Rhodpsn"/>
</dbReference>
<dbReference type="InterPro" id="IPR017452">
    <property type="entry name" value="GPCR_Rhodpsn_7TM"/>
</dbReference>
<dbReference type="PANTHER" id="PTHR24248:SF196">
    <property type="entry name" value="5-HYDROXYTRYPTAMINE RECEPTOR 1D"/>
    <property type="match status" value="1"/>
</dbReference>
<dbReference type="PANTHER" id="PTHR24248">
    <property type="entry name" value="ADRENERGIC RECEPTOR-RELATED G-PROTEIN COUPLED RECEPTOR"/>
    <property type="match status" value="1"/>
</dbReference>
<dbReference type="Pfam" id="PF00001">
    <property type="entry name" value="7tm_1"/>
    <property type="match status" value="1"/>
</dbReference>
<dbReference type="PRINTS" id="PR00515">
    <property type="entry name" value="5HT1FRECEPTR"/>
</dbReference>
<dbReference type="PRINTS" id="PR01101">
    <property type="entry name" value="5HTRECEPTOR"/>
</dbReference>
<dbReference type="PRINTS" id="PR00237">
    <property type="entry name" value="GPCRRHODOPSN"/>
</dbReference>
<dbReference type="SMART" id="SM01381">
    <property type="entry name" value="7TM_GPCR_Srsx"/>
    <property type="match status" value="1"/>
</dbReference>
<dbReference type="SUPFAM" id="SSF81321">
    <property type="entry name" value="Family A G protein-coupled receptor-like"/>
    <property type="match status" value="1"/>
</dbReference>
<dbReference type="PROSITE" id="PS00237">
    <property type="entry name" value="G_PROTEIN_RECEP_F1_1"/>
    <property type="match status" value="1"/>
</dbReference>
<dbReference type="PROSITE" id="PS50262">
    <property type="entry name" value="G_PROTEIN_RECEP_F1_2"/>
    <property type="match status" value="1"/>
</dbReference>
<reference key="1">
    <citation type="journal article" date="1993" name="Proc. Natl. Acad. Sci. U.S.A.">
        <title>Molecular cloning and functional expression of 5-HT1E-like rat and human 5-hydroxytryptamine receptor genes.</title>
        <authorList>
            <person name="Lovenberg T.W."/>
            <person name="Erlander M.G."/>
            <person name="Baron B.M."/>
            <person name="Racke M."/>
            <person name="Slone A.L."/>
            <person name="Siegel B.W."/>
            <person name="Craft C.M."/>
            <person name="Burns J.E."/>
            <person name="Danielson P.E."/>
            <person name="Sutcliffe G.J."/>
        </authorList>
    </citation>
    <scope>NUCLEOTIDE SEQUENCE [GENOMIC DNA]</scope>
    <scope>FUNCTION</scope>
    <scope>SUBCELLULAR LOCATION</scope>
</reference>
<reference key="2">
    <citation type="journal article" date="1993" name="Proc. Natl. Acad. Sci. U.S.A.">
        <title>Cloning of another human serotonin receptor (5-HT1F): a fifth 5-HT1 receptor subtype coupled to the inhibition of adenylate cyclase.</title>
        <authorList>
            <person name="Adham N."/>
            <person name="Kao H.-T."/>
            <person name="Schechter L.E."/>
            <person name="Bard J."/>
            <person name="Olsen M."/>
            <person name="Urquhart D."/>
            <person name="Durkin M."/>
            <person name="Hartig P.R."/>
            <person name="Winshank R.L."/>
            <person name="Branchek T.A."/>
        </authorList>
    </citation>
    <scope>NUCLEOTIDE SEQUENCE [GENOMIC DNA]</scope>
    <scope>FUNCTION</scope>
    <scope>SUBCELLULAR LOCATION</scope>
</reference>
<reference key="3">
    <citation type="submission" date="2002-04" db="EMBL/GenBank/DDBJ databases">
        <title>cDNA clones of human proteins involved in signal transduction sequenced by the Guthrie cDNA resource center (www.cdna.org).</title>
        <authorList>
            <person name="Puhl H.L. III"/>
            <person name="Ikeda S.R."/>
            <person name="Aronstam R.S."/>
        </authorList>
    </citation>
    <scope>NUCLEOTIDE SEQUENCE [LARGE SCALE MRNA]</scope>
    <source>
        <tissue>Brain</tissue>
    </source>
</reference>
<reference key="4">
    <citation type="journal article" date="2004" name="Genome Res.">
        <title>The status, quality, and expansion of the NIH full-length cDNA project: the Mammalian Gene Collection (MGC).</title>
        <authorList>
            <consortium name="The MGC Project Team"/>
        </authorList>
    </citation>
    <scope>NUCLEOTIDE SEQUENCE [LARGE SCALE MRNA]</scope>
</reference>
<reference key="5">
    <citation type="journal article" date="2006" name="Nature">
        <title>The DNA sequence, annotation and analysis of human chromosome 3.</title>
        <authorList>
            <person name="Muzny D.M."/>
            <person name="Scherer S.E."/>
            <person name="Kaul R."/>
            <person name="Wang J."/>
            <person name="Yu J."/>
            <person name="Sudbrak R."/>
            <person name="Buhay C.J."/>
            <person name="Chen R."/>
            <person name="Cree A."/>
            <person name="Ding Y."/>
            <person name="Dugan-Rocha S."/>
            <person name="Gill R."/>
            <person name="Gunaratne P."/>
            <person name="Harris R.A."/>
            <person name="Hawes A.C."/>
            <person name="Hernandez J."/>
            <person name="Hodgson A.V."/>
            <person name="Hume J."/>
            <person name="Jackson A."/>
            <person name="Khan Z.M."/>
            <person name="Kovar-Smith C."/>
            <person name="Lewis L.R."/>
            <person name="Lozado R.J."/>
            <person name="Metzker M.L."/>
            <person name="Milosavljevic A."/>
            <person name="Miner G.R."/>
            <person name="Morgan M.B."/>
            <person name="Nazareth L.V."/>
            <person name="Scott G."/>
            <person name="Sodergren E."/>
            <person name="Song X.-Z."/>
            <person name="Steffen D."/>
            <person name="Wei S."/>
            <person name="Wheeler D.A."/>
            <person name="Wright M.W."/>
            <person name="Worley K.C."/>
            <person name="Yuan Y."/>
            <person name="Zhang Z."/>
            <person name="Adams C.Q."/>
            <person name="Ansari-Lari M.A."/>
            <person name="Ayele M."/>
            <person name="Brown M.J."/>
            <person name="Chen G."/>
            <person name="Chen Z."/>
            <person name="Clendenning J."/>
            <person name="Clerc-Blankenburg K.P."/>
            <person name="Chen R."/>
            <person name="Chen Z."/>
            <person name="Davis C."/>
            <person name="Delgado O."/>
            <person name="Dinh H.H."/>
            <person name="Dong W."/>
            <person name="Draper H."/>
            <person name="Ernst S."/>
            <person name="Fu G."/>
            <person name="Gonzalez-Garay M.L."/>
            <person name="Garcia D.K."/>
            <person name="Gillett W."/>
            <person name="Gu J."/>
            <person name="Hao B."/>
            <person name="Haugen E."/>
            <person name="Havlak P."/>
            <person name="He X."/>
            <person name="Hennig S."/>
            <person name="Hu S."/>
            <person name="Huang W."/>
            <person name="Jackson L.R."/>
            <person name="Jacob L.S."/>
            <person name="Kelly S.H."/>
            <person name="Kube M."/>
            <person name="Levy R."/>
            <person name="Li Z."/>
            <person name="Liu B."/>
            <person name="Liu J."/>
            <person name="Liu W."/>
            <person name="Lu J."/>
            <person name="Maheshwari M."/>
            <person name="Nguyen B.-V."/>
            <person name="Okwuonu G.O."/>
            <person name="Palmeiri A."/>
            <person name="Pasternak S."/>
            <person name="Perez L.M."/>
            <person name="Phelps K.A."/>
            <person name="Plopper F.J."/>
            <person name="Qiang B."/>
            <person name="Raymond C."/>
            <person name="Rodriguez R."/>
            <person name="Saenphimmachak C."/>
            <person name="Santibanez J."/>
            <person name="Shen H."/>
            <person name="Shen Y."/>
            <person name="Subramanian S."/>
            <person name="Tabor P.E."/>
            <person name="Verduzco D."/>
            <person name="Waldron L."/>
            <person name="Wang J."/>
            <person name="Wang J."/>
            <person name="Wang Q."/>
            <person name="Williams G.A."/>
            <person name="Wong G.K.-S."/>
            <person name="Yao Z."/>
            <person name="Zhang J."/>
            <person name="Zhang X."/>
            <person name="Zhao G."/>
            <person name="Zhou J."/>
            <person name="Zhou Y."/>
            <person name="Nelson D."/>
            <person name="Lehrach H."/>
            <person name="Reinhardt R."/>
            <person name="Naylor S.L."/>
            <person name="Yang H."/>
            <person name="Olson M."/>
            <person name="Weinstock G."/>
            <person name="Gibbs R.A."/>
        </authorList>
    </citation>
    <scope>NUCLEOTIDE SEQUENCE [LARGE SCALE GENOMIC DNA]</scope>
</reference>
<reference key="6">
    <citation type="journal article" date="2008" name="Chem. Rev.">
        <title>Serotonin receptors.</title>
        <authorList>
            <person name="Nichols D.E."/>
            <person name="Nichols C.D."/>
        </authorList>
    </citation>
    <scope>REVIEW</scope>
</reference>
<reference key="7">
    <citation type="journal article" date="2011" name="J. Pharmacol. Exp. Ther.">
        <title>Toward selective drug development for the human 5-hydroxytryptamine 1E receptor: a comparison of 5-hydroxytryptamine 1E and 1F receptor structure-affinity relationships.</title>
        <authorList>
            <person name="Klein M.T."/>
            <person name="Dukat M."/>
            <person name="Glennon R.A."/>
            <person name="Teitler M."/>
        </authorList>
    </citation>
    <scope>FUNCTION</scope>
    <scope>SUBCELLULAR LOCATION</scope>
</reference>
<reference key="8">
    <citation type="journal article" date="2022" name="Cell Discov.">
        <title>Structural insights into the ligand binding and Gi coupling of serotonin receptor 5-HT5A.</title>
        <authorList>
            <person name="Tan Y."/>
            <person name="Xu P."/>
            <person name="Huang S."/>
            <person name="Yang G."/>
            <person name="Zhou F."/>
            <person name="He X."/>
            <person name="Ma H."/>
            <person name="Xu H.E."/>
            <person name="Jiang Y."/>
        </authorList>
    </citation>
    <scope>FUNCTION</scope>
    <scope>MUTAGENESIS OF GLU-313</scope>
</reference>
<reference key="9">
    <citation type="journal article" date="2011" name="Physiol. Res.">
        <title>Serotonin receptors - from molecular biology to clinical applications.</title>
        <authorList>
            <person name="Pytliak M."/>
            <person name="Vargova V."/>
            <person name="Mechirova V."/>
            <person name="Felsoci M."/>
        </authorList>
    </citation>
    <scope>REVIEW</scope>
</reference>
<reference evidence="13" key="10">
    <citation type="journal article" date="2021" name="Cell Res.">
        <title>Structural basis for recognition of anti-migraine drug lasmiditan by the serotonin receptor 5-HT1F-G protein complex.</title>
        <authorList>
            <person name="Huang S."/>
            <person name="Xu P."/>
            <person name="Tan Y."/>
            <person name="You C."/>
            <person name="Zhang Y."/>
            <person name="Jiang Y."/>
            <person name="Xu H.E."/>
        </authorList>
    </citation>
    <scope>STRUCTURE BY ELECTRON MICROSCOPY (3.4 ANGSTROMS) IN COMPLEX WITH GNAI1; GNB1 AND GNG2</scope>
    <scope>DISULFIDE BOND</scope>
    <scope>FUNCTION</scope>
    <scope>MUTAGENESIS OF ASP-103; ILE-104; CYS-107; THR-108; THR-182; TRP-306; PHE-309; PHE-310; GLU-313 AND TYR-337</scope>
</reference>
<organism>
    <name type="scientific">Homo sapiens</name>
    <name type="common">Human</name>
    <dbReference type="NCBI Taxonomy" id="9606"/>
    <lineage>
        <taxon>Eukaryota</taxon>
        <taxon>Metazoa</taxon>
        <taxon>Chordata</taxon>
        <taxon>Craniata</taxon>
        <taxon>Vertebrata</taxon>
        <taxon>Euteleostomi</taxon>
        <taxon>Mammalia</taxon>
        <taxon>Eutheria</taxon>
        <taxon>Euarchontoglires</taxon>
        <taxon>Primates</taxon>
        <taxon>Haplorrhini</taxon>
        <taxon>Catarrhini</taxon>
        <taxon>Hominidae</taxon>
        <taxon>Homo</taxon>
    </lineage>
</organism>
<sequence>MDFLNSSDQNLTSEELLNRMPSKILVSLTLSGLALMTTTINSLVIAAIIVTRKLHHPANYLICSLAVTDFLVAVLVMPFSIVYIVRESWIMGQVVCDIWLSVDITCCTCSILHLSAIALDRYRAITDAVEYARKRTPKHAGIMITIVWIISVFISMPPLFWRHQGTSRDDECIIKHDHIVSTIYSTFGAFYIPLALILILYYKIYRAAKTLYHKRQASRIAKEEVNGQVLLESGEKSTKSVSTSYVLEKSLSDPSTDFDKIHSTVRSLRSEFKHEKSWRRQKISGTRERKAATTLGLILGAFVICWLPFFVKELVVNVCDKCKISEEMSNFLAWLGYLNSLINPLIYTIFNEDFKKAFQKLVRCRC</sequence>
<accession>P30939</accession>
<feature type="chain" id="PRO_0000068937" description="5-hydroxytryptamine receptor 1F">
    <location>
        <begin position="1"/>
        <end position="366"/>
    </location>
</feature>
<feature type="topological domain" description="Extracellular" evidence="6 13">
    <location>
        <begin position="1"/>
        <end position="24"/>
    </location>
</feature>
<feature type="transmembrane region" description="Helical; Name=1" evidence="6 13">
    <location>
        <begin position="25"/>
        <end position="49"/>
    </location>
</feature>
<feature type="topological domain" description="Cytoplasmic" evidence="6 13">
    <location>
        <begin position="50"/>
        <end position="59"/>
    </location>
</feature>
<feature type="transmembrane region" description="Helical; Name=2" evidence="6 13">
    <location>
        <begin position="60"/>
        <end position="81"/>
    </location>
</feature>
<feature type="topological domain" description="Extracellular" evidence="6 13">
    <location>
        <begin position="82"/>
        <end position="96"/>
    </location>
</feature>
<feature type="transmembrane region" description="Helical; Name=3" evidence="6 13">
    <location>
        <begin position="97"/>
        <end position="119"/>
    </location>
</feature>
<feature type="topological domain" description="Cytoplasmic" evidence="6 13">
    <location>
        <begin position="120"/>
        <end position="139"/>
    </location>
</feature>
<feature type="transmembrane region" description="Helical; Name=4" evidence="6 13">
    <location>
        <begin position="140"/>
        <end position="159"/>
    </location>
</feature>
<feature type="topological domain" description="Extracellular" evidence="6 13">
    <location>
        <begin position="160"/>
        <end position="178"/>
    </location>
</feature>
<feature type="transmembrane region" description="Helical; Name=5" evidence="6 13">
    <location>
        <begin position="179"/>
        <end position="202"/>
    </location>
</feature>
<feature type="topological domain" description="Cytoplasmic" evidence="6 13">
    <location>
        <begin position="203"/>
        <end position="291"/>
    </location>
</feature>
<feature type="transmembrane region" description="Helical; Name=6" evidence="6 13">
    <location>
        <begin position="292"/>
        <end position="315"/>
    </location>
</feature>
<feature type="topological domain" description="Extracellular" evidence="6 13">
    <location>
        <begin position="316"/>
        <end position="327"/>
    </location>
</feature>
<feature type="transmembrane region" description="Helical; Name=7" evidence="6 13">
    <location>
        <begin position="328"/>
        <end position="350"/>
    </location>
</feature>
<feature type="topological domain" description="Cytoplasmic" evidence="6 13">
    <location>
        <begin position="351"/>
        <end position="366"/>
    </location>
</feature>
<feature type="short sequence motif" description="DRY motif; important for ligand-induced conformation changes" evidence="2">
    <location>
        <begin position="120"/>
        <end position="122"/>
    </location>
</feature>
<feature type="short sequence motif" description="NPxxY motif; important for ligand-induced conformation changes and signaling" evidence="2">
    <location>
        <begin position="343"/>
        <end position="347"/>
    </location>
</feature>
<feature type="binding site" evidence="1">
    <location>
        <position position="103"/>
    </location>
    <ligand>
        <name>serotonin</name>
        <dbReference type="ChEBI" id="CHEBI:350546"/>
    </ligand>
</feature>
<feature type="binding site" evidence="1">
    <location>
        <position position="107"/>
    </location>
    <ligand>
        <name>serotonin</name>
        <dbReference type="ChEBI" id="CHEBI:350546"/>
    </ligand>
</feature>
<feature type="glycosylation site" description="N-linked (GlcNAc...) asparagine" evidence="3">
    <location>
        <position position="5"/>
    </location>
</feature>
<feature type="glycosylation site" description="N-linked (GlcNAc...) asparagine" evidence="3">
    <location>
        <position position="10"/>
    </location>
</feature>
<feature type="disulfide bond" evidence="4 6 13">
    <location>
        <begin position="96"/>
        <end position="172"/>
    </location>
</feature>
<feature type="mutagenesis site" description="Decreased binding to lasmiditan drug." evidence="6">
    <original>D</original>
    <variation>A</variation>
    <location>
        <position position="103"/>
    </location>
</feature>
<feature type="mutagenesis site" description="Decreased binding to lasmiditan drug." evidence="6">
    <original>I</original>
    <variation>A</variation>
    <location>
        <position position="104"/>
    </location>
</feature>
<feature type="mutagenesis site" description="Decreased binding to lasmiditan drug." evidence="6">
    <original>C</original>
    <variation>A</variation>
    <location>
        <position position="107"/>
    </location>
</feature>
<feature type="mutagenesis site" description="Decreased binding to lasmiditan drug." evidence="6">
    <original>T</original>
    <variation>A</variation>
    <location>
        <position position="108"/>
    </location>
</feature>
<feature type="mutagenesis site" description="Decreased binding to lasmiditan drug." evidence="6">
    <original>T</original>
    <variation>A</variation>
    <location>
        <position position="182"/>
    </location>
</feature>
<feature type="mutagenesis site" description="Decreased binding to lasmiditan drug." evidence="6">
    <original>W</original>
    <variation>A</variation>
    <location>
        <position position="306"/>
    </location>
</feature>
<feature type="mutagenesis site" description="Decreased binding to lasmiditan drug." evidence="6">
    <original>F</original>
    <variation>A</variation>
    <location>
        <position position="309"/>
    </location>
</feature>
<feature type="mutagenesis site" description="Decreased binding to lasmiditan drug." evidence="6">
    <original>F</original>
    <variation>A</variation>
    <location>
        <position position="310"/>
    </location>
</feature>
<feature type="mutagenesis site" description="Decreased binding to lasmiditan drug. Nearly abolished G(i)/(o)-coupled receptor activity." evidence="6 7">
    <original>E</original>
    <variation>S</variation>
    <variation>A</variation>
    <location>
        <position position="313"/>
    </location>
</feature>
<feature type="mutagenesis site" description="Decreased binding to lasmiditan drug." evidence="6">
    <original>Y</original>
    <variation>A</variation>
    <location>
        <position position="337"/>
    </location>
</feature>
<feature type="helix" evidence="14">
    <location>
        <begin position="20"/>
        <end position="50"/>
    </location>
</feature>
<feature type="helix" evidence="14">
    <location>
        <begin position="57"/>
        <end position="59"/>
    </location>
</feature>
<feature type="helix" evidence="14">
    <location>
        <begin position="60"/>
        <end position="75"/>
    </location>
</feature>
<feature type="helix" evidence="14">
    <location>
        <begin position="77"/>
        <end position="85"/>
    </location>
</feature>
<feature type="helix" evidence="14">
    <location>
        <begin position="93"/>
        <end position="126"/>
    </location>
</feature>
<feature type="turn" evidence="14">
    <location>
        <begin position="128"/>
        <end position="130"/>
    </location>
</feature>
<feature type="helix" evidence="14">
    <location>
        <begin position="131"/>
        <end position="134"/>
    </location>
</feature>
<feature type="helix" evidence="14">
    <location>
        <begin position="137"/>
        <end position="153"/>
    </location>
</feature>
<feature type="helix" evidence="14">
    <location>
        <begin position="157"/>
        <end position="162"/>
    </location>
</feature>
<feature type="helix" evidence="14">
    <location>
        <begin position="167"/>
        <end position="169"/>
    </location>
</feature>
<feature type="helix" evidence="14">
    <location>
        <begin position="179"/>
        <end position="212"/>
    </location>
</feature>
<feature type="helix" evidence="14">
    <location>
        <begin position="286"/>
        <end position="318"/>
    </location>
</feature>
<feature type="helix" evidence="14">
    <location>
        <begin position="326"/>
        <end position="346"/>
    </location>
</feature>
<feature type="turn" evidence="14">
    <location>
        <begin position="347"/>
        <end position="349"/>
    </location>
</feature>
<feature type="helix" evidence="14">
    <location>
        <begin position="352"/>
        <end position="360"/>
    </location>
</feature>